<name>TA2R4_GORGO</name>
<organism>
    <name type="scientific">Gorilla gorilla gorilla</name>
    <name type="common">Western lowland gorilla</name>
    <dbReference type="NCBI Taxonomy" id="9595"/>
    <lineage>
        <taxon>Eukaryota</taxon>
        <taxon>Metazoa</taxon>
        <taxon>Chordata</taxon>
        <taxon>Craniata</taxon>
        <taxon>Vertebrata</taxon>
        <taxon>Euteleostomi</taxon>
        <taxon>Mammalia</taxon>
        <taxon>Eutheria</taxon>
        <taxon>Euarchontoglires</taxon>
        <taxon>Primates</taxon>
        <taxon>Haplorrhini</taxon>
        <taxon>Catarrhini</taxon>
        <taxon>Hominidae</taxon>
        <taxon>Gorilla</taxon>
    </lineage>
</organism>
<sequence length="299" mass="33918">MLRLFYFSAVIASVILNFVGIIMNLFITVVNCKTWVKSHRISSSDRILFSLGITRFLMLGLFLVNTIYFVSSNMERSVYLSAFFVLCFMFLDSSSLWFVTLLNILYCVKITNFQHSVFLLLKRSISPKIPRLLLAFVLISAFTTCLYITLSQASPFPELVTTRNNTSFNISEGILSLVVSLVLSSSLQFIINVTSASLLIHSLRRHIQKMQKNATGFWNPQMEAHVGAMKLMVYFLILYIPYSVATLVQYLPFYAGMDMGTKSICLIFATLYSPGHSVLIIITHPKLKTTAKKILCFKK</sequence>
<gene>
    <name type="primary">TAS2R4</name>
</gene>
<evidence type="ECO:0000250" key="1"/>
<evidence type="ECO:0000255" key="2"/>
<evidence type="ECO:0000305" key="3"/>
<feature type="chain" id="PRO_0000082204" description="Taste receptor type 2 member 4">
    <location>
        <begin position="1"/>
        <end position="299"/>
    </location>
</feature>
<feature type="topological domain" description="Extracellular" evidence="2">
    <location>
        <begin position="1"/>
        <end position="9"/>
    </location>
</feature>
<feature type="transmembrane region" description="Helical; Name=1" evidence="2">
    <location>
        <begin position="10"/>
        <end position="30"/>
    </location>
</feature>
<feature type="topological domain" description="Cytoplasmic" evidence="2">
    <location>
        <begin position="31"/>
        <end position="46"/>
    </location>
</feature>
<feature type="transmembrane region" description="Helical; Name=2" evidence="2">
    <location>
        <begin position="47"/>
        <end position="67"/>
    </location>
</feature>
<feature type="topological domain" description="Extracellular" evidence="2">
    <location>
        <begin position="68"/>
        <end position="81"/>
    </location>
</feature>
<feature type="transmembrane region" description="Helical; Name=3" evidence="2">
    <location>
        <begin position="82"/>
        <end position="102"/>
    </location>
</feature>
<feature type="topological domain" description="Cytoplasmic" evidence="2">
    <location>
        <begin position="103"/>
        <end position="131"/>
    </location>
</feature>
<feature type="transmembrane region" description="Helical; Name=4" evidence="2">
    <location>
        <begin position="132"/>
        <end position="152"/>
    </location>
</feature>
<feature type="topological domain" description="Extracellular" evidence="2">
    <location>
        <begin position="153"/>
        <end position="172"/>
    </location>
</feature>
<feature type="transmembrane region" description="Helical; Name=5" evidence="2">
    <location>
        <begin position="173"/>
        <end position="193"/>
    </location>
</feature>
<feature type="topological domain" description="Cytoplasmic" evidence="2">
    <location>
        <begin position="194"/>
        <end position="230"/>
    </location>
</feature>
<feature type="transmembrane region" description="Helical; Name=6" evidence="2">
    <location>
        <begin position="231"/>
        <end position="251"/>
    </location>
</feature>
<feature type="topological domain" description="Extracellular" evidence="2">
    <location>
        <begin position="252"/>
        <end position="262"/>
    </location>
</feature>
<feature type="transmembrane region" description="Helical; Name=7" evidence="2">
    <location>
        <begin position="263"/>
        <end position="283"/>
    </location>
</feature>
<feature type="topological domain" description="Cytoplasmic" evidence="2">
    <location>
        <begin position="284"/>
        <end position="299"/>
    </location>
</feature>
<feature type="glycosylation site" description="N-linked (GlcNAc...) asparagine" evidence="2">
    <location>
        <position position="164"/>
    </location>
</feature>
<feature type="glycosylation site" description="N-linked (GlcNAc...) asparagine" evidence="2">
    <location>
        <position position="165"/>
    </location>
</feature>
<feature type="glycosylation site" description="N-linked (GlcNAc...) asparagine" evidence="2">
    <location>
        <position position="169"/>
    </location>
</feature>
<dbReference type="EMBL" id="AY724925">
    <property type="protein sequence ID" value="AAU21131.1"/>
    <property type="molecule type" value="Genomic_DNA"/>
</dbReference>
<dbReference type="RefSeq" id="XP_018886824.1">
    <property type="nucleotide sequence ID" value="XM_019031279.1"/>
</dbReference>
<dbReference type="SMR" id="Q645Y8"/>
<dbReference type="FunCoup" id="Q645Y8">
    <property type="interactions" value="199"/>
</dbReference>
<dbReference type="STRING" id="9593.ENSGGOP00000024500"/>
<dbReference type="GlyCosmos" id="Q645Y8">
    <property type="glycosylation" value="3 sites, No reported glycans"/>
</dbReference>
<dbReference type="Ensembl" id="ENSGGOT00000030072.2">
    <property type="protein sequence ID" value="ENSGGOP00000024500.1"/>
    <property type="gene ID" value="ENSGGOG00000023731.2"/>
</dbReference>
<dbReference type="GeneID" id="101151824"/>
<dbReference type="KEGG" id="ggo:101151824"/>
<dbReference type="CTD" id="50832"/>
<dbReference type="eggNOG" id="ENOG502S2SI">
    <property type="taxonomic scope" value="Eukaryota"/>
</dbReference>
<dbReference type="GeneTree" id="ENSGT01100000263477"/>
<dbReference type="HOGENOM" id="CLU_072337_3_0_1"/>
<dbReference type="InParanoid" id="Q645Y8"/>
<dbReference type="OMA" id="MKLMIYF"/>
<dbReference type="Proteomes" id="UP000001519">
    <property type="component" value="Chromosome 7"/>
</dbReference>
<dbReference type="Bgee" id="ENSGGOG00000023731">
    <property type="expression patterns" value="Expressed in cerebellum and 3 other cell types or tissues"/>
</dbReference>
<dbReference type="GO" id="GO:0060170">
    <property type="term" value="C:ciliary membrane"/>
    <property type="evidence" value="ECO:0007669"/>
    <property type="project" value="UniProtKB-SubCell"/>
</dbReference>
<dbReference type="GO" id="GO:0016020">
    <property type="term" value="C:membrane"/>
    <property type="evidence" value="ECO:0000318"/>
    <property type="project" value="GO_Central"/>
</dbReference>
<dbReference type="GO" id="GO:0033038">
    <property type="term" value="F:bitter taste receptor activity"/>
    <property type="evidence" value="ECO:0000318"/>
    <property type="project" value="GO_Central"/>
</dbReference>
<dbReference type="GO" id="GO:0004930">
    <property type="term" value="F:G protein-coupled receptor activity"/>
    <property type="evidence" value="ECO:0007669"/>
    <property type="project" value="UniProtKB-KW"/>
</dbReference>
<dbReference type="GO" id="GO:0001580">
    <property type="term" value="P:detection of chemical stimulus involved in sensory perception of bitter taste"/>
    <property type="evidence" value="ECO:0000318"/>
    <property type="project" value="GO_Central"/>
</dbReference>
<dbReference type="GO" id="GO:0007585">
    <property type="term" value="P:respiratory gaseous exchange by respiratory system"/>
    <property type="evidence" value="ECO:0007669"/>
    <property type="project" value="Ensembl"/>
</dbReference>
<dbReference type="CDD" id="cd15013">
    <property type="entry name" value="7tm_TAS2R4"/>
    <property type="match status" value="1"/>
</dbReference>
<dbReference type="FunFam" id="1.20.1070.10:FF:000055">
    <property type="entry name" value="Taste receptor type 2"/>
    <property type="match status" value="1"/>
</dbReference>
<dbReference type="Gene3D" id="1.20.1070.10">
    <property type="entry name" value="Rhodopsin 7-helix transmembrane proteins"/>
    <property type="match status" value="1"/>
</dbReference>
<dbReference type="InterPro" id="IPR007960">
    <property type="entry name" value="TAS2R"/>
</dbReference>
<dbReference type="InterPro" id="IPR030055">
    <property type="entry name" value="TAS2R4"/>
</dbReference>
<dbReference type="PANTHER" id="PTHR11394">
    <property type="entry name" value="TASTE RECEPTOR TYPE 2"/>
    <property type="match status" value="1"/>
</dbReference>
<dbReference type="PANTHER" id="PTHR11394:SF55">
    <property type="entry name" value="TASTE RECEPTOR TYPE 2 MEMBER 4"/>
    <property type="match status" value="1"/>
</dbReference>
<dbReference type="Pfam" id="PF05296">
    <property type="entry name" value="TAS2R"/>
    <property type="match status" value="1"/>
</dbReference>
<dbReference type="SUPFAM" id="SSF81321">
    <property type="entry name" value="Family A G protein-coupled receptor-like"/>
    <property type="match status" value="1"/>
</dbReference>
<proteinExistence type="inferred from homology"/>
<accession>Q645Y8</accession>
<keyword id="KW-1003">Cell membrane</keyword>
<keyword id="KW-0966">Cell projection</keyword>
<keyword id="KW-0969">Cilium</keyword>
<keyword id="KW-0297">G-protein coupled receptor</keyword>
<keyword id="KW-0325">Glycoprotein</keyword>
<keyword id="KW-0472">Membrane</keyword>
<keyword id="KW-0675">Receptor</keyword>
<keyword id="KW-1185">Reference proteome</keyword>
<keyword id="KW-0716">Sensory transduction</keyword>
<keyword id="KW-0919">Taste</keyword>
<keyword id="KW-0807">Transducer</keyword>
<keyword id="KW-0812">Transmembrane</keyword>
<keyword id="KW-1133">Transmembrane helix</keyword>
<protein>
    <recommendedName>
        <fullName>Taste receptor type 2 member 4</fullName>
        <shortName>T2R4</shortName>
    </recommendedName>
</protein>
<reference key="1">
    <citation type="journal article" date="2005" name="Mol. Biol. Evol.">
        <title>Evolution of bitter taste receptors in humans and apes.</title>
        <authorList>
            <person name="Fischer A."/>
            <person name="Gilad Y."/>
            <person name="Man O."/>
            <person name="Paeaebo S."/>
        </authorList>
    </citation>
    <scope>NUCLEOTIDE SEQUENCE [GENOMIC DNA]</scope>
</reference>
<comment type="function">
    <text evidence="1">Gustducin-coupled receptor implicated in the perception of bitter compounds in the oral cavity and the gastrointestinal tract. Signals through PLCB2 and the calcium-regulated cation channel TRPM5 (By similarity). In airway epithelial cells, binding of denatonium increases the intracellular calcium ion concentration and stimulates ciliary beat frequency (By similarity).</text>
</comment>
<comment type="subcellular location">
    <subcellularLocation>
        <location>Membrane</location>
        <topology>Multi-pass membrane protein</topology>
    </subcellularLocation>
    <subcellularLocation>
        <location>Cell projection</location>
        <location>Cilium membrane</location>
    </subcellularLocation>
    <text evidence="1">In airway epithelial cells, localizes to motile cilia.</text>
</comment>
<comment type="miscellaneous">
    <text>Several bitter taste receptors are expressed in a single taste receptor cell.</text>
</comment>
<comment type="similarity">
    <text evidence="3">Belongs to the G-protein coupled receptor T2R family.</text>
</comment>